<accession>P9WIX2</accession>
<accession>L0TDB2</accession>
<accession>P65565</accession>
<accession>P95171</accession>
<keyword id="KW-1003">Cell membrane</keyword>
<keyword id="KW-0472">Membrane</keyword>
<keyword id="KW-0520">NAD</keyword>
<keyword id="KW-0874">Quinone</keyword>
<keyword id="KW-1185">Reference proteome</keyword>
<keyword id="KW-1278">Translocase</keyword>
<keyword id="KW-0812">Transmembrane</keyword>
<keyword id="KW-1133">Transmembrane helix</keyword>
<keyword id="KW-0813">Transport</keyword>
<organism>
    <name type="scientific">Mycobacterium tuberculosis (strain CDC 1551 / Oshkosh)</name>
    <dbReference type="NCBI Taxonomy" id="83331"/>
    <lineage>
        <taxon>Bacteria</taxon>
        <taxon>Bacillati</taxon>
        <taxon>Actinomycetota</taxon>
        <taxon>Actinomycetes</taxon>
        <taxon>Mycobacteriales</taxon>
        <taxon>Mycobacteriaceae</taxon>
        <taxon>Mycobacterium</taxon>
        <taxon>Mycobacterium tuberculosis complex</taxon>
    </lineage>
</organism>
<comment type="function">
    <text evidence="1">NDH-1 shuttles electrons from NADH, via FMN and iron-sulfur (Fe-S) centers, to quinones in the respiratory chain. The immediate electron acceptor for the enzyme in this species is believed to be a menaquinone. Couples the redox reaction to proton translocation (for every two electrons transferred, four hydrogen ions are translocated across the cytoplasmic membrane), and thus conserves the redox energy in a proton gradient.</text>
</comment>
<comment type="catalytic activity">
    <reaction evidence="1">
        <text>a quinone + NADH + 5 H(+)(in) = a quinol + NAD(+) + 4 H(+)(out)</text>
        <dbReference type="Rhea" id="RHEA:57888"/>
        <dbReference type="ChEBI" id="CHEBI:15378"/>
        <dbReference type="ChEBI" id="CHEBI:24646"/>
        <dbReference type="ChEBI" id="CHEBI:57540"/>
        <dbReference type="ChEBI" id="CHEBI:57945"/>
        <dbReference type="ChEBI" id="CHEBI:132124"/>
    </reaction>
</comment>
<comment type="subunit">
    <text evidence="1">NDH-1 is composed of 14 different subunits. Subunits NuoA, H, J, K, L, M, N constitute the membrane sector of the complex.</text>
</comment>
<comment type="subcellular location">
    <subcellularLocation>
        <location>Cell membrane</location>
        <topology>Multi-pass membrane protein</topology>
    </subcellularLocation>
</comment>
<comment type="similarity">
    <text evidence="1">Belongs to the complex I subunit 4L family.</text>
</comment>
<gene>
    <name evidence="1" type="primary">nuoK</name>
    <name type="ordered locus">MT3243</name>
</gene>
<reference key="1">
    <citation type="journal article" date="2002" name="J. Bacteriol.">
        <title>Whole-genome comparison of Mycobacterium tuberculosis clinical and laboratory strains.</title>
        <authorList>
            <person name="Fleischmann R.D."/>
            <person name="Alland D."/>
            <person name="Eisen J.A."/>
            <person name="Carpenter L."/>
            <person name="White O."/>
            <person name="Peterson J.D."/>
            <person name="DeBoy R.T."/>
            <person name="Dodson R.J."/>
            <person name="Gwinn M.L."/>
            <person name="Haft D.H."/>
            <person name="Hickey E.K."/>
            <person name="Kolonay J.F."/>
            <person name="Nelson W.C."/>
            <person name="Umayam L.A."/>
            <person name="Ermolaeva M.D."/>
            <person name="Salzberg S.L."/>
            <person name="Delcher A."/>
            <person name="Utterback T.R."/>
            <person name="Weidman J.F."/>
            <person name="Khouri H.M."/>
            <person name="Gill J."/>
            <person name="Mikula A."/>
            <person name="Bishai W."/>
            <person name="Jacobs W.R. Jr."/>
            <person name="Venter J.C."/>
            <person name="Fraser C.M."/>
        </authorList>
    </citation>
    <scope>NUCLEOTIDE SEQUENCE [LARGE SCALE GENOMIC DNA]</scope>
    <source>
        <strain>CDC 1551 / Oshkosh</strain>
    </source>
</reference>
<evidence type="ECO:0000255" key="1">
    <source>
        <dbReference type="HAMAP-Rule" id="MF_01456"/>
    </source>
</evidence>
<dbReference type="EC" id="7.1.1.-" evidence="1"/>
<dbReference type="EMBL" id="AE000516">
    <property type="protein sequence ID" value="AAK47582.1"/>
    <property type="molecule type" value="Genomic_DNA"/>
</dbReference>
<dbReference type="PIR" id="D70648">
    <property type="entry name" value="D70648"/>
</dbReference>
<dbReference type="RefSeq" id="WP_003416452.1">
    <property type="nucleotide sequence ID" value="NZ_KK341227.1"/>
</dbReference>
<dbReference type="SMR" id="P9WIX2"/>
<dbReference type="GeneID" id="45427142"/>
<dbReference type="KEGG" id="mtc:MT3243"/>
<dbReference type="PATRIC" id="fig|83331.31.peg.3491"/>
<dbReference type="HOGENOM" id="CLU_144724_0_0_11"/>
<dbReference type="Proteomes" id="UP000001020">
    <property type="component" value="Chromosome"/>
</dbReference>
<dbReference type="GO" id="GO:0030964">
    <property type="term" value="C:NADH dehydrogenase complex"/>
    <property type="evidence" value="ECO:0007669"/>
    <property type="project" value="TreeGrafter"/>
</dbReference>
<dbReference type="GO" id="GO:0005886">
    <property type="term" value="C:plasma membrane"/>
    <property type="evidence" value="ECO:0007669"/>
    <property type="project" value="UniProtKB-SubCell"/>
</dbReference>
<dbReference type="GO" id="GO:0050136">
    <property type="term" value="F:NADH:ubiquinone reductase (non-electrogenic) activity"/>
    <property type="evidence" value="ECO:0007669"/>
    <property type="project" value="UniProtKB-UniRule"/>
</dbReference>
<dbReference type="GO" id="GO:0048038">
    <property type="term" value="F:quinone binding"/>
    <property type="evidence" value="ECO:0007669"/>
    <property type="project" value="UniProtKB-KW"/>
</dbReference>
<dbReference type="GO" id="GO:0042773">
    <property type="term" value="P:ATP synthesis coupled electron transport"/>
    <property type="evidence" value="ECO:0007669"/>
    <property type="project" value="InterPro"/>
</dbReference>
<dbReference type="FunFam" id="1.10.287.3510:FF:000001">
    <property type="entry name" value="NADH-quinone oxidoreductase subunit K"/>
    <property type="match status" value="1"/>
</dbReference>
<dbReference type="Gene3D" id="1.10.287.3510">
    <property type="match status" value="1"/>
</dbReference>
<dbReference type="HAMAP" id="MF_01456">
    <property type="entry name" value="NDH1_NuoK"/>
    <property type="match status" value="1"/>
</dbReference>
<dbReference type="InterPro" id="IPR001133">
    <property type="entry name" value="NADH_UbQ_OxRdtase_chain4L/K"/>
</dbReference>
<dbReference type="InterPro" id="IPR039428">
    <property type="entry name" value="NUOK/Mnh_C1-like"/>
</dbReference>
<dbReference type="NCBIfam" id="NF004320">
    <property type="entry name" value="PRK05715.1-2"/>
    <property type="match status" value="1"/>
</dbReference>
<dbReference type="PANTHER" id="PTHR11434:SF21">
    <property type="entry name" value="NADH DEHYDROGENASE SUBUNIT 4L-RELATED"/>
    <property type="match status" value="1"/>
</dbReference>
<dbReference type="PANTHER" id="PTHR11434">
    <property type="entry name" value="NADH-UBIQUINONE OXIDOREDUCTASE SUBUNIT ND4L"/>
    <property type="match status" value="1"/>
</dbReference>
<dbReference type="Pfam" id="PF00420">
    <property type="entry name" value="Oxidored_q2"/>
    <property type="match status" value="1"/>
</dbReference>
<protein>
    <recommendedName>
        <fullName evidence="1">NADH-quinone oxidoreductase subunit K</fullName>
        <ecNumber evidence="1">7.1.1.-</ecNumber>
    </recommendedName>
    <alternativeName>
        <fullName evidence="1">NADH dehydrogenase I subunit K</fullName>
    </alternativeName>
    <alternativeName>
        <fullName evidence="1">NDH-1 subunit K</fullName>
    </alternativeName>
</protein>
<sequence length="99" mass="10858">MNPANYLYLSVLLFTIGASGVLLRRNAIVMFMCVELMLNAVNLAFVTFARMHGHLDAQMIAFFTMVVAACEVVVGLAIIMTIFRTRKSASVDDANLLKG</sequence>
<name>NUOK_MYCTO</name>
<proteinExistence type="inferred from homology"/>
<feature type="chain" id="PRO_0000427930" description="NADH-quinone oxidoreductase subunit K">
    <location>
        <begin position="1"/>
        <end position="99"/>
    </location>
</feature>
<feature type="transmembrane region" description="Helical" evidence="1">
    <location>
        <begin position="3"/>
        <end position="23"/>
    </location>
</feature>
<feature type="transmembrane region" description="Helical" evidence="1">
    <location>
        <begin position="28"/>
        <end position="48"/>
    </location>
</feature>
<feature type="transmembrane region" description="Helical" evidence="1">
    <location>
        <begin position="59"/>
        <end position="79"/>
    </location>
</feature>